<gene>
    <name type="primary">NEIL2</name>
</gene>
<organism>
    <name type="scientific">Homo sapiens</name>
    <name type="common">Human</name>
    <dbReference type="NCBI Taxonomy" id="9606"/>
    <lineage>
        <taxon>Eukaryota</taxon>
        <taxon>Metazoa</taxon>
        <taxon>Chordata</taxon>
        <taxon>Craniata</taxon>
        <taxon>Vertebrata</taxon>
        <taxon>Euteleostomi</taxon>
        <taxon>Mammalia</taxon>
        <taxon>Eutheria</taxon>
        <taxon>Euarchontoglires</taxon>
        <taxon>Primates</taxon>
        <taxon>Haplorrhini</taxon>
        <taxon>Catarrhini</taxon>
        <taxon>Hominidae</taxon>
        <taxon>Homo</taxon>
    </lineage>
</organism>
<proteinExistence type="evidence at protein level"/>
<comment type="function">
    <text evidence="5 7 8 9">Involved in base excision repair of DNA damaged by oxidation or by mutagenic agents. Has DNA glycosylase activity towards 5-hydroxyuracil and other oxidized derivatives of cytosine with a preference for mismatched double-stranded DNA (DNA bubbles). Has low or no DNA glycosylase activity towards thymine glycol, 2-hydroxyadenine, hypoxanthine and 8-oxoguanine. Has AP (apurinic/apyrimidinic) lyase activity and introduces nicks in the DNA strand. Cleaves the DNA backbone by beta-delta elimination to generate a single-strand break at the site of the removed base with both 3'- and 5'-phosphates.</text>
</comment>
<comment type="catalytic activity">
    <reaction evidence="3">
        <text>2'-deoxyribonucleotide-(2'-deoxyribose 5'-phosphate)-2'-deoxyribonucleotide-DNA = a 3'-end 2'-deoxyribonucleotide-(2,3-dehydro-2,3-deoxyribose 5'-phosphate)-DNA + a 5'-end 5'-phospho-2'-deoxyribonucleoside-DNA + H(+)</text>
        <dbReference type="Rhea" id="RHEA:66592"/>
        <dbReference type="Rhea" id="RHEA-COMP:13180"/>
        <dbReference type="Rhea" id="RHEA-COMP:16897"/>
        <dbReference type="Rhea" id="RHEA-COMP:17067"/>
        <dbReference type="ChEBI" id="CHEBI:15378"/>
        <dbReference type="ChEBI" id="CHEBI:136412"/>
        <dbReference type="ChEBI" id="CHEBI:157695"/>
        <dbReference type="ChEBI" id="CHEBI:167181"/>
        <dbReference type="EC" id="4.2.99.18"/>
    </reaction>
</comment>
<comment type="activity regulation">
    <text>Acetylation of Lys-50 leads to loss of DNA nicking activity. Acetylation of Lys-154 has no effect.</text>
</comment>
<comment type="subunit">
    <text>Binds EP300.</text>
</comment>
<comment type="interaction">
    <interactant intactId="EBI-10281234">
        <id>Q969S2</id>
    </interactant>
    <interactant intactId="EBI-12143631">
        <id>Q6ZTQ4</id>
        <label>CDHR3</label>
    </interactant>
    <organismsDiffer>false</organismsDiffer>
    <experiments>3</experiments>
</comment>
<comment type="interaction">
    <interactant intactId="EBI-10281234">
        <id>Q969S2</id>
    </interactant>
    <interactant intactId="EBI-748171">
        <id>O43186</id>
        <label>CRX</label>
    </interactant>
    <organismsDiffer>false</organismsDiffer>
    <experiments>3</experiments>
</comment>
<comment type="interaction">
    <interactant intactId="EBI-10281234">
        <id>Q969S2</id>
    </interactant>
    <interactant intactId="EBI-6509505">
        <id>Q0VD86</id>
        <label>INCA1</label>
    </interactant>
    <organismsDiffer>false</organismsDiffer>
    <experiments>3</experiments>
</comment>
<comment type="interaction">
    <interactant intactId="EBI-10281234">
        <id>Q969S2</id>
    </interactant>
    <interactant intactId="EBI-11911016">
        <id>P80188</id>
        <label>LCN2</label>
    </interactant>
    <organismsDiffer>false</organismsDiffer>
    <experiments>3</experiments>
</comment>
<comment type="interaction">
    <interactant intactId="EBI-10281234">
        <id>Q969S2</id>
    </interactant>
    <interactant intactId="EBI-2864512">
        <id>P50221</id>
        <label>MEOX1</label>
    </interactant>
    <organismsDiffer>false</organismsDiffer>
    <experiments>6</experiments>
</comment>
<comment type="interaction">
    <interactant intactId="EBI-10281234">
        <id>Q969S2</id>
    </interactant>
    <interactant intactId="EBI-296331">
        <id>Q02548</id>
        <label>PAX5</label>
    </interactant>
    <organismsDiffer>false</organismsDiffer>
    <experiments>3</experiments>
</comment>
<comment type="interaction">
    <interactant intactId="EBI-10281234">
        <id>Q969S2</id>
    </interactant>
    <interactant intactId="EBI-307352">
        <id>Q04864</id>
        <label>REL</label>
    </interactant>
    <organismsDiffer>false</organismsDiffer>
    <experiments>3</experiments>
</comment>
<comment type="interaction">
    <interactant intactId="EBI-10281234">
        <id>Q969S2</id>
    </interactant>
    <interactant intactId="EBI-10829018">
        <id>Q04864-2</id>
        <label>REL</label>
    </interactant>
    <organismsDiffer>false</organismsDiffer>
    <experiments>3</experiments>
</comment>
<comment type="interaction">
    <interactant intactId="EBI-10281234">
        <id>Q969S2</id>
    </interactant>
    <interactant intactId="EBI-719493">
        <id>P14373</id>
        <label>TRIM27</label>
    </interactant>
    <organismsDiffer>false</organismsDiffer>
    <experiments>6</experiments>
</comment>
<comment type="subcellular location">
    <subcellularLocation>
        <location evidence="5">Nucleus</location>
    </subcellularLocation>
</comment>
<comment type="alternative products">
    <event type="alternative splicing"/>
    <isoform>
        <id>Q969S2-1</id>
        <name>1</name>
        <sequence type="displayed"/>
    </isoform>
    <isoform>
        <id>Q969S2-2</id>
        <name>2</name>
        <sequence type="described" ref="VSP_012209"/>
    </isoform>
    <isoform>
        <id>Q969S2-3</id>
        <name>3</name>
        <sequence type="described" ref="VSP_012208"/>
    </isoform>
    <isoform>
        <id>Q969S2-4</id>
        <name>4</name>
        <sequence type="described" ref="VSP_043343"/>
    </isoform>
</comment>
<comment type="tissue specificity">
    <text evidence="5">Detected in testis, skeletal muscle, heart, brain, placenta, lung, pancreas, kidney and liver.</text>
</comment>
<comment type="domain">
    <text>The zinc-finger domain is important for DNA binding.</text>
</comment>
<comment type="similarity">
    <text evidence="3">Belongs to the FPG family.</text>
</comment>
<dbReference type="EC" id="3.2.2.-"/>
<dbReference type="EC" id="4.2.99.18"/>
<dbReference type="EMBL" id="AB079070">
    <property type="protein sequence ID" value="BAC06478.1"/>
    <property type="molecule type" value="mRNA"/>
</dbReference>
<dbReference type="EMBL" id="AK056206">
    <property type="protein sequence ID" value="BAB71120.1"/>
    <property type="molecule type" value="mRNA"/>
</dbReference>
<dbReference type="EMBL" id="AK097389">
    <property type="protein sequence ID" value="BAC05030.1"/>
    <property type="molecule type" value="mRNA"/>
</dbReference>
<dbReference type="EMBL" id="AK294224">
    <property type="protein sequence ID" value="BAG57528.1"/>
    <property type="molecule type" value="mRNA"/>
</dbReference>
<dbReference type="EMBL" id="BX537529">
    <property type="protein sequence ID" value="CAD97774.1"/>
    <property type="molecule type" value="mRNA"/>
</dbReference>
<dbReference type="EMBL" id="AY306127">
    <property type="protein sequence ID" value="AAP45052.1"/>
    <property type="molecule type" value="Genomic_DNA"/>
</dbReference>
<dbReference type="EMBL" id="AC069185">
    <property type="status" value="NOT_ANNOTATED_CDS"/>
    <property type="molecule type" value="Genomic_DNA"/>
</dbReference>
<dbReference type="EMBL" id="BC013952">
    <property type="protein sequence ID" value="AAH13952.1"/>
    <property type="molecule type" value="mRNA"/>
</dbReference>
<dbReference type="EMBL" id="BC013964">
    <property type="protein sequence ID" value="AAH13964.1"/>
    <property type="molecule type" value="mRNA"/>
</dbReference>
<dbReference type="CCDS" id="CCDS47802.1">
    <molecule id="Q969S2-4"/>
</dbReference>
<dbReference type="CCDS" id="CCDS47803.1">
    <molecule id="Q969S2-3"/>
</dbReference>
<dbReference type="CCDS" id="CCDS5984.1">
    <molecule id="Q969S2-1"/>
</dbReference>
<dbReference type="RefSeq" id="NP_001129218.1">
    <molecule id="Q969S2-1"/>
    <property type="nucleotide sequence ID" value="NM_001135746.3"/>
</dbReference>
<dbReference type="RefSeq" id="NP_001129219.1">
    <molecule id="Q969S2-3"/>
    <property type="nucleotide sequence ID" value="NM_001135747.3"/>
</dbReference>
<dbReference type="RefSeq" id="NP_001129220.1">
    <molecule id="Q969S2-4"/>
    <property type="nucleotide sequence ID" value="NM_001135748.3"/>
</dbReference>
<dbReference type="RefSeq" id="NP_001336368.1">
    <molecule id="Q969S2-3"/>
    <property type="nucleotide sequence ID" value="NM_001349439.2"/>
</dbReference>
<dbReference type="RefSeq" id="NP_001336369.1">
    <molecule id="Q969S2-3"/>
    <property type="nucleotide sequence ID" value="NM_001349440.2"/>
</dbReference>
<dbReference type="RefSeq" id="NP_001336370.1">
    <molecule id="Q969S2-3"/>
    <property type="nucleotide sequence ID" value="NM_001349441.2"/>
</dbReference>
<dbReference type="RefSeq" id="NP_001336371.1">
    <molecule id="Q969S2-1"/>
    <property type="nucleotide sequence ID" value="NM_001349442.2"/>
</dbReference>
<dbReference type="RefSeq" id="NP_659480.1">
    <molecule id="Q969S2-1"/>
    <property type="nucleotide sequence ID" value="NM_145043.4"/>
</dbReference>
<dbReference type="RefSeq" id="XP_005272439.1">
    <property type="nucleotide sequence ID" value="XM_005272382.2"/>
</dbReference>
<dbReference type="RefSeq" id="XP_005272440.1">
    <property type="nucleotide sequence ID" value="XM_005272383.2"/>
</dbReference>
<dbReference type="RefSeq" id="XP_016868790.1">
    <property type="nucleotide sequence ID" value="XM_017013301.1"/>
</dbReference>
<dbReference type="SMR" id="Q969S2"/>
<dbReference type="BioGRID" id="128946">
    <property type="interactions" value="22"/>
</dbReference>
<dbReference type="CORUM" id="Q969S2"/>
<dbReference type="FunCoup" id="Q969S2">
    <property type="interactions" value="1210"/>
</dbReference>
<dbReference type="IntAct" id="Q969S2">
    <property type="interactions" value="15"/>
</dbReference>
<dbReference type="STRING" id="9606.ENSP00000284503"/>
<dbReference type="DrugBank" id="DB09130">
    <property type="generic name" value="Copper"/>
</dbReference>
<dbReference type="DrugBank" id="DB14490">
    <property type="generic name" value="Ferrous ascorbate"/>
</dbReference>
<dbReference type="DrugBank" id="DB14491">
    <property type="generic name" value="Ferrous fumarate"/>
</dbReference>
<dbReference type="DrugBank" id="DB14488">
    <property type="generic name" value="Ferrous gluconate"/>
</dbReference>
<dbReference type="DrugBank" id="DB14501">
    <property type="generic name" value="Ferrous glycine sulfate"/>
</dbReference>
<dbReference type="DrugBank" id="DB14489">
    <property type="generic name" value="Ferrous succinate"/>
</dbReference>
<dbReference type="DrugBank" id="DB01592">
    <property type="generic name" value="Iron"/>
</dbReference>
<dbReference type="GlyGen" id="Q969S2">
    <property type="glycosylation" value="1 site"/>
</dbReference>
<dbReference type="iPTMnet" id="Q969S2"/>
<dbReference type="PhosphoSitePlus" id="Q969S2"/>
<dbReference type="BioMuta" id="NEIL2"/>
<dbReference type="DMDM" id="56404653"/>
<dbReference type="jPOST" id="Q969S2"/>
<dbReference type="MassIVE" id="Q969S2"/>
<dbReference type="PaxDb" id="9606-ENSP00000284503"/>
<dbReference type="PeptideAtlas" id="Q969S2"/>
<dbReference type="ProteomicsDB" id="75827">
    <molecule id="Q969S2-1"/>
</dbReference>
<dbReference type="ProteomicsDB" id="75828">
    <molecule id="Q969S2-2"/>
</dbReference>
<dbReference type="ProteomicsDB" id="75829">
    <molecule id="Q969S2-3"/>
</dbReference>
<dbReference type="ProteomicsDB" id="75830">
    <molecule id="Q969S2-4"/>
</dbReference>
<dbReference type="Pumba" id="Q969S2"/>
<dbReference type="Antibodypedia" id="22115">
    <property type="antibodies" value="139 antibodies from 24 providers"/>
</dbReference>
<dbReference type="DNASU" id="252969"/>
<dbReference type="Ensembl" id="ENST00000284503.7">
    <molecule id="Q969S2-1"/>
    <property type="protein sequence ID" value="ENSP00000284503.6"/>
    <property type="gene ID" value="ENSG00000154328.16"/>
</dbReference>
<dbReference type="Ensembl" id="ENST00000403422.7">
    <molecule id="Q969S2-3"/>
    <property type="protein sequence ID" value="ENSP00000384070.3"/>
    <property type="gene ID" value="ENSG00000154328.16"/>
</dbReference>
<dbReference type="Ensembl" id="ENST00000436750.7">
    <molecule id="Q969S2-1"/>
    <property type="protein sequence ID" value="ENSP00000394023.2"/>
    <property type="gene ID" value="ENSG00000154328.16"/>
</dbReference>
<dbReference type="Ensembl" id="ENST00000455213.6">
    <molecule id="Q969S2-1"/>
    <property type="protein sequence ID" value="ENSP00000397538.2"/>
    <property type="gene ID" value="ENSG00000154328.16"/>
</dbReference>
<dbReference type="Ensembl" id="ENST00000528323.5">
    <molecule id="Q969S2-4"/>
    <property type="protein sequence ID" value="ENSP00000435657.1"/>
    <property type="gene ID" value="ENSG00000154328.16"/>
</dbReference>
<dbReference type="Ensembl" id="ENST00000710791.1">
    <molecule id="Q969S2-1"/>
    <property type="protein sequence ID" value="ENSP00000518488.1"/>
    <property type="gene ID" value="ENSG00000292286.1"/>
</dbReference>
<dbReference type="Ensembl" id="ENST00000710792.1">
    <molecule id="Q969S2-3"/>
    <property type="protein sequence ID" value="ENSP00000518489.1"/>
    <property type="gene ID" value="ENSG00000292286.1"/>
</dbReference>
<dbReference type="Ensembl" id="ENST00000710793.1">
    <molecule id="Q969S2-1"/>
    <property type="protein sequence ID" value="ENSP00000518490.1"/>
    <property type="gene ID" value="ENSG00000292286.1"/>
</dbReference>
<dbReference type="Ensembl" id="ENST00000710794.1">
    <molecule id="Q969S2-1"/>
    <property type="protein sequence ID" value="ENSP00000518491.1"/>
    <property type="gene ID" value="ENSG00000292286.1"/>
</dbReference>
<dbReference type="Ensembl" id="ENST00000710795.1">
    <molecule id="Q969S2-4"/>
    <property type="protein sequence ID" value="ENSP00000518492.1"/>
    <property type="gene ID" value="ENSG00000292286.1"/>
</dbReference>
<dbReference type="GeneID" id="252969"/>
<dbReference type="KEGG" id="hsa:252969"/>
<dbReference type="MANE-Select" id="ENST00000284503.7">
    <property type="protein sequence ID" value="ENSP00000284503.6"/>
    <property type="RefSeq nucleotide sequence ID" value="NM_145043.4"/>
    <property type="RefSeq protein sequence ID" value="NP_659480.1"/>
</dbReference>
<dbReference type="UCSC" id="uc003wue.3">
    <molecule id="Q969S2-1"/>
    <property type="organism name" value="human"/>
</dbReference>
<dbReference type="AGR" id="HGNC:18956"/>
<dbReference type="CTD" id="252969"/>
<dbReference type="DisGeNET" id="252969"/>
<dbReference type="GeneCards" id="NEIL2"/>
<dbReference type="HGNC" id="HGNC:18956">
    <property type="gene designation" value="NEIL2"/>
</dbReference>
<dbReference type="HPA" id="ENSG00000154328">
    <property type="expression patterns" value="Low tissue specificity"/>
</dbReference>
<dbReference type="MIM" id="608933">
    <property type="type" value="gene"/>
</dbReference>
<dbReference type="neXtProt" id="NX_Q969S2"/>
<dbReference type="OpenTargets" id="ENSG00000154328"/>
<dbReference type="PharmGKB" id="PA38769"/>
<dbReference type="VEuPathDB" id="HostDB:ENSG00000154328"/>
<dbReference type="eggNOG" id="ENOG502RIIB">
    <property type="taxonomic scope" value="Eukaryota"/>
</dbReference>
<dbReference type="GeneTree" id="ENSGT00940000153230"/>
<dbReference type="HOGENOM" id="CLU_072818_0_0_1"/>
<dbReference type="InParanoid" id="Q969S2"/>
<dbReference type="OMA" id="LTWWCPH"/>
<dbReference type="OrthoDB" id="444592at2759"/>
<dbReference type="PAN-GO" id="Q969S2">
    <property type="GO annotations" value="3 GO annotations based on evolutionary models"/>
</dbReference>
<dbReference type="PhylomeDB" id="Q969S2"/>
<dbReference type="TreeFam" id="TF331502"/>
<dbReference type="BRENDA" id="3.2.2.23">
    <property type="organism ID" value="2681"/>
</dbReference>
<dbReference type="PathwayCommons" id="Q969S2"/>
<dbReference type="Reactome" id="R-HSA-110328">
    <property type="pathway name" value="Recognition and association of DNA glycosylase with site containing an affected pyrimidine"/>
</dbReference>
<dbReference type="Reactome" id="R-HSA-110329">
    <property type="pathway name" value="Cleavage of the damaged pyrimidine"/>
</dbReference>
<dbReference type="Reactome" id="R-HSA-5649702">
    <property type="pathway name" value="APEX1-Independent Resolution of AP Sites via the Single Nucleotide Replacement Pathway"/>
</dbReference>
<dbReference type="SignaLink" id="Q969S2"/>
<dbReference type="SIGNOR" id="Q969S2"/>
<dbReference type="BioGRID-ORCS" id="252969">
    <property type="hits" value="9 hits in 1155 CRISPR screens"/>
</dbReference>
<dbReference type="ChiTaRS" id="NEIL2">
    <property type="organism name" value="human"/>
</dbReference>
<dbReference type="GeneWiki" id="NEIL2"/>
<dbReference type="GenomeRNAi" id="252969"/>
<dbReference type="Pharos" id="Q969S2">
    <property type="development level" value="Tbio"/>
</dbReference>
<dbReference type="PRO" id="PR:Q969S2"/>
<dbReference type="Proteomes" id="UP000005640">
    <property type="component" value="Chromosome 8"/>
</dbReference>
<dbReference type="RNAct" id="Q969S2">
    <property type="molecule type" value="protein"/>
</dbReference>
<dbReference type="Bgee" id="ENSG00000154328">
    <property type="expression patterns" value="Expressed in oviduct epithelium and 165 other cell types or tissues"/>
</dbReference>
<dbReference type="ExpressionAtlas" id="Q969S2">
    <property type="expression patterns" value="baseline and differential"/>
</dbReference>
<dbReference type="GO" id="GO:0005737">
    <property type="term" value="C:cytoplasm"/>
    <property type="evidence" value="ECO:0007669"/>
    <property type="project" value="Ensembl"/>
</dbReference>
<dbReference type="GO" id="GO:0043231">
    <property type="term" value="C:intracellular membrane-bounded organelle"/>
    <property type="evidence" value="ECO:0000314"/>
    <property type="project" value="HPA"/>
</dbReference>
<dbReference type="GO" id="GO:0072686">
    <property type="term" value="C:mitotic spindle"/>
    <property type="evidence" value="ECO:0007669"/>
    <property type="project" value="Ensembl"/>
</dbReference>
<dbReference type="GO" id="GO:0005654">
    <property type="term" value="C:nucleoplasm"/>
    <property type="evidence" value="ECO:0000314"/>
    <property type="project" value="HPA"/>
</dbReference>
<dbReference type="GO" id="GO:0005634">
    <property type="term" value="C:nucleus"/>
    <property type="evidence" value="ECO:0000318"/>
    <property type="project" value="GO_Central"/>
</dbReference>
<dbReference type="GO" id="GO:0140078">
    <property type="term" value="F:class I DNA-(apurinic or apyrimidinic site) endonuclease activity"/>
    <property type="evidence" value="ECO:0007669"/>
    <property type="project" value="UniProtKB-EC"/>
</dbReference>
<dbReference type="GO" id="GO:0003684">
    <property type="term" value="F:damaged DNA binding"/>
    <property type="evidence" value="ECO:0007669"/>
    <property type="project" value="InterPro"/>
</dbReference>
<dbReference type="GO" id="GO:0019104">
    <property type="term" value="F:DNA N-glycosylase activity"/>
    <property type="evidence" value="ECO:0000304"/>
    <property type="project" value="Reactome"/>
</dbReference>
<dbReference type="GO" id="GO:0008017">
    <property type="term" value="F:microtubule binding"/>
    <property type="evidence" value="ECO:0007669"/>
    <property type="project" value="Ensembl"/>
</dbReference>
<dbReference type="GO" id="GO:0008270">
    <property type="term" value="F:zinc ion binding"/>
    <property type="evidence" value="ECO:0007669"/>
    <property type="project" value="UniProtKB-KW"/>
</dbReference>
<dbReference type="GO" id="GO:0045008">
    <property type="term" value="P:depyrimidination"/>
    <property type="evidence" value="ECO:0000304"/>
    <property type="project" value="Reactome"/>
</dbReference>
<dbReference type="CDD" id="cd08968">
    <property type="entry name" value="MeNeil2_N"/>
    <property type="match status" value="1"/>
</dbReference>
<dbReference type="FunFam" id="1.10.8.50:FF:000010">
    <property type="entry name" value="endonuclease 8-like 2"/>
    <property type="match status" value="1"/>
</dbReference>
<dbReference type="Gene3D" id="1.10.8.50">
    <property type="match status" value="1"/>
</dbReference>
<dbReference type="InterPro" id="IPR015886">
    <property type="entry name" value="DNA_glyclase/AP_lyase_DNA-bd"/>
</dbReference>
<dbReference type="InterPro" id="IPR012319">
    <property type="entry name" value="FPG_cat"/>
</dbReference>
<dbReference type="InterPro" id="IPR010979">
    <property type="entry name" value="Ribosomal_uS13-like_H2TH"/>
</dbReference>
<dbReference type="InterPro" id="IPR000214">
    <property type="entry name" value="Znf_DNA_glyclase/AP_lyase"/>
</dbReference>
<dbReference type="PANTHER" id="PTHR22993:SF29">
    <property type="entry name" value="ENDONUCLEASE 8-LIKE 2"/>
    <property type="match status" value="1"/>
</dbReference>
<dbReference type="PANTHER" id="PTHR22993">
    <property type="entry name" value="FORMAMIDOPYRIMIDINE-DNA GLYCOSYLASE"/>
    <property type="match status" value="1"/>
</dbReference>
<dbReference type="Pfam" id="PF06831">
    <property type="entry name" value="H2TH"/>
    <property type="match status" value="1"/>
</dbReference>
<dbReference type="SMART" id="SM01232">
    <property type="entry name" value="H2TH"/>
    <property type="match status" value="1"/>
</dbReference>
<dbReference type="SUPFAM" id="SSF46946">
    <property type="entry name" value="S13-like H2TH domain"/>
    <property type="match status" value="1"/>
</dbReference>
<dbReference type="PROSITE" id="PS51068">
    <property type="entry name" value="FPG_CAT"/>
    <property type="match status" value="1"/>
</dbReference>
<dbReference type="PROSITE" id="PS51066">
    <property type="entry name" value="ZF_FPG_2"/>
    <property type="match status" value="1"/>
</dbReference>
<keyword id="KW-0007">Acetylation</keyword>
<keyword id="KW-0025">Alternative splicing</keyword>
<keyword id="KW-0903">Direct protein sequencing</keyword>
<keyword id="KW-0227">DNA damage</keyword>
<keyword id="KW-0234">DNA repair</keyword>
<keyword id="KW-0238">DNA-binding</keyword>
<keyword id="KW-0326">Glycosidase</keyword>
<keyword id="KW-0378">Hydrolase</keyword>
<keyword id="KW-0456">Lyase</keyword>
<keyword id="KW-0479">Metal-binding</keyword>
<keyword id="KW-0511">Multifunctional enzyme</keyword>
<keyword id="KW-0539">Nucleus</keyword>
<keyword id="KW-0597">Phosphoprotein</keyword>
<keyword id="KW-1267">Proteomics identification</keyword>
<keyword id="KW-1185">Reference proteome</keyword>
<keyword id="KW-0862">Zinc</keyword>
<keyword id="KW-0863">Zinc-finger</keyword>
<accession>Q969S2</accession>
<accession>B4DFR7</accession>
<accession>Q7Z3Q7</accession>
<accession>Q8N842</accession>
<accession>Q8NG52</accession>
<sequence>MPEGPLVRKFHHLVSPFVGQQVVKTGGSSKKLQPASLQSLWLQDTQVHGKKLFLRFDLDEEMGPPGSSPTPEPPQKEVQKEGAADPKQVGEPSGQKTLDGSSRSAELVPQGEDDSEYLERDAPAGDAGRWLRVSFGLFGSVWVNDFSRAKKANKRGDWRDPSPRLVLHFGGGGFLAFYNCQLSWSSSPVVTPTCDILSEKFHRGQALEALGQAQPVCYTLLDQRYFSGLGNIIKNEALYRAGIHPLSLGSVLSASRREVLVDHVVEFSTAWLQGKFQGRPQHTQVYQKEQCPAGHQVMKEAFGPEDGLQRLTWWCPQCQPQLSEEPEQCQFS</sequence>
<reference key="1">
    <citation type="journal article" date="2002" name="J. Biol. Chem.">
        <title>A back-up glycosylase in Nth1 knock-out mice is a functional Nei (endonuclease VIII) homologue.</title>
        <authorList>
            <person name="Takao M."/>
            <person name="Kanno S."/>
            <person name="Kobayashi K."/>
            <person name="Zhang Q.-M."/>
            <person name="Yonei S."/>
            <person name="van der Horst G.T.J."/>
            <person name="Yasui A."/>
        </authorList>
    </citation>
    <scope>NUCLEOTIDE SEQUENCE [MRNA] (ISOFORM 1)</scope>
    <scope>VARIANT GLN-103</scope>
</reference>
<reference key="2">
    <citation type="journal article" date="2004" name="Nat. Genet.">
        <title>Complete sequencing and characterization of 21,243 full-length human cDNAs.</title>
        <authorList>
            <person name="Ota T."/>
            <person name="Suzuki Y."/>
            <person name="Nishikawa T."/>
            <person name="Otsuki T."/>
            <person name="Sugiyama T."/>
            <person name="Irie R."/>
            <person name="Wakamatsu A."/>
            <person name="Hayashi K."/>
            <person name="Sato H."/>
            <person name="Nagai K."/>
            <person name="Kimura K."/>
            <person name="Makita H."/>
            <person name="Sekine M."/>
            <person name="Obayashi M."/>
            <person name="Nishi T."/>
            <person name="Shibahara T."/>
            <person name="Tanaka T."/>
            <person name="Ishii S."/>
            <person name="Yamamoto J."/>
            <person name="Saito K."/>
            <person name="Kawai Y."/>
            <person name="Isono Y."/>
            <person name="Nakamura Y."/>
            <person name="Nagahari K."/>
            <person name="Murakami K."/>
            <person name="Yasuda T."/>
            <person name="Iwayanagi T."/>
            <person name="Wagatsuma M."/>
            <person name="Shiratori A."/>
            <person name="Sudo H."/>
            <person name="Hosoiri T."/>
            <person name="Kaku Y."/>
            <person name="Kodaira H."/>
            <person name="Kondo H."/>
            <person name="Sugawara M."/>
            <person name="Takahashi M."/>
            <person name="Kanda K."/>
            <person name="Yokoi T."/>
            <person name="Furuya T."/>
            <person name="Kikkawa E."/>
            <person name="Omura Y."/>
            <person name="Abe K."/>
            <person name="Kamihara K."/>
            <person name="Katsuta N."/>
            <person name="Sato K."/>
            <person name="Tanikawa M."/>
            <person name="Yamazaki M."/>
            <person name="Ninomiya K."/>
            <person name="Ishibashi T."/>
            <person name="Yamashita H."/>
            <person name="Murakawa K."/>
            <person name="Fujimori K."/>
            <person name="Tanai H."/>
            <person name="Kimata M."/>
            <person name="Watanabe M."/>
            <person name="Hiraoka S."/>
            <person name="Chiba Y."/>
            <person name="Ishida S."/>
            <person name="Ono Y."/>
            <person name="Takiguchi S."/>
            <person name="Watanabe S."/>
            <person name="Yosida M."/>
            <person name="Hotuta T."/>
            <person name="Kusano J."/>
            <person name="Kanehori K."/>
            <person name="Takahashi-Fujii A."/>
            <person name="Hara H."/>
            <person name="Tanase T.-O."/>
            <person name="Nomura Y."/>
            <person name="Togiya S."/>
            <person name="Komai F."/>
            <person name="Hara R."/>
            <person name="Takeuchi K."/>
            <person name="Arita M."/>
            <person name="Imose N."/>
            <person name="Musashino K."/>
            <person name="Yuuki H."/>
            <person name="Oshima A."/>
            <person name="Sasaki N."/>
            <person name="Aotsuka S."/>
            <person name="Yoshikawa Y."/>
            <person name="Matsunawa H."/>
            <person name="Ichihara T."/>
            <person name="Shiohata N."/>
            <person name="Sano S."/>
            <person name="Moriya S."/>
            <person name="Momiyama H."/>
            <person name="Satoh N."/>
            <person name="Takami S."/>
            <person name="Terashima Y."/>
            <person name="Suzuki O."/>
            <person name="Nakagawa S."/>
            <person name="Senoh A."/>
            <person name="Mizoguchi H."/>
            <person name="Goto Y."/>
            <person name="Shimizu F."/>
            <person name="Wakebe H."/>
            <person name="Hishigaki H."/>
            <person name="Watanabe T."/>
            <person name="Sugiyama A."/>
            <person name="Takemoto M."/>
            <person name="Kawakami B."/>
            <person name="Yamazaki M."/>
            <person name="Watanabe K."/>
            <person name="Kumagai A."/>
            <person name="Itakura S."/>
            <person name="Fukuzumi Y."/>
            <person name="Fujimori Y."/>
            <person name="Komiyama M."/>
            <person name="Tashiro H."/>
            <person name="Tanigami A."/>
            <person name="Fujiwara T."/>
            <person name="Ono T."/>
            <person name="Yamada K."/>
            <person name="Fujii Y."/>
            <person name="Ozaki K."/>
            <person name="Hirao M."/>
            <person name="Ohmori Y."/>
            <person name="Kawabata A."/>
            <person name="Hikiji T."/>
            <person name="Kobatake N."/>
            <person name="Inagaki H."/>
            <person name="Ikema Y."/>
            <person name="Okamoto S."/>
            <person name="Okitani R."/>
            <person name="Kawakami T."/>
            <person name="Noguchi S."/>
            <person name="Itoh T."/>
            <person name="Shigeta K."/>
            <person name="Senba T."/>
            <person name="Matsumura K."/>
            <person name="Nakajima Y."/>
            <person name="Mizuno T."/>
            <person name="Morinaga M."/>
            <person name="Sasaki M."/>
            <person name="Togashi T."/>
            <person name="Oyama M."/>
            <person name="Hata H."/>
            <person name="Watanabe M."/>
            <person name="Komatsu T."/>
            <person name="Mizushima-Sugano J."/>
            <person name="Satoh T."/>
            <person name="Shirai Y."/>
            <person name="Takahashi Y."/>
            <person name="Nakagawa K."/>
            <person name="Okumura K."/>
            <person name="Nagase T."/>
            <person name="Nomura N."/>
            <person name="Kikuchi H."/>
            <person name="Masuho Y."/>
            <person name="Yamashita R."/>
            <person name="Nakai K."/>
            <person name="Yada T."/>
            <person name="Nakamura Y."/>
            <person name="Ohara O."/>
            <person name="Isogai T."/>
            <person name="Sugano S."/>
        </authorList>
    </citation>
    <scope>NUCLEOTIDE SEQUENCE [LARGE SCALE MRNA] (ISOFORMS 1; 3 AND 4)</scope>
    <source>
        <tissue>Amygdala</tissue>
        <tissue>Testis</tissue>
    </source>
</reference>
<reference key="3">
    <citation type="journal article" date="2007" name="BMC Genomics">
        <title>The full-ORF clone resource of the German cDNA consortium.</title>
        <authorList>
            <person name="Bechtel S."/>
            <person name="Rosenfelder H."/>
            <person name="Duda A."/>
            <person name="Schmidt C.P."/>
            <person name="Ernst U."/>
            <person name="Wellenreuther R."/>
            <person name="Mehrle A."/>
            <person name="Schuster C."/>
            <person name="Bahr A."/>
            <person name="Bloecker H."/>
            <person name="Heubner D."/>
            <person name="Hoerlein A."/>
            <person name="Michel G."/>
            <person name="Wedler H."/>
            <person name="Koehrer K."/>
            <person name="Ottenwaelder B."/>
            <person name="Poustka A."/>
            <person name="Wiemann S."/>
            <person name="Schupp I."/>
        </authorList>
    </citation>
    <scope>NUCLEOTIDE SEQUENCE [LARGE SCALE MRNA] (ISOFORM 2)</scope>
    <source>
        <tissue>Fetal kidney</tissue>
    </source>
</reference>
<reference key="4">
    <citation type="submission" date="2003-05" db="EMBL/GenBank/DDBJ databases">
        <authorList>
            <consortium name="NIEHS SNPs program"/>
        </authorList>
    </citation>
    <scope>NUCLEOTIDE SEQUENCE [GENOMIC DNA]</scope>
    <scope>VARIANTS SER-70; GLN-103; TRP-103; LEU-257 AND THR-304</scope>
</reference>
<reference key="5">
    <citation type="journal article" date="2006" name="Nature">
        <title>DNA sequence and analysis of human chromosome 8.</title>
        <authorList>
            <person name="Nusbaum C."/>
            <person name="Mikkelsen T.S."/>
            <person name="Zody M.C."/>
            <person name="Asakawa S."/>
            <person name="Taudien S."/>
            <person name="Garber M."/>
            <person name="Kodira C.D."/>
            <person name="Schueler M.G."/>
            <person name="Shimizu A."/>
            <person name="Whittaker C.A."/>
            <person name="Chang J.L."/>
            <person name="Cuomo C.A."/>
            <person name="Dewar K."/>
            <person name="FitzGerald M.G."/>
            <person name="Yang X."/>
            <person name="Allen N.R."/>
            <person name="Anderson S."/>
            <person name="Asakawa T."/>
            <person name="Blechschmidt K."/>
            <person name="Bloom T."/>
            <person name="Borowsky M.L."/>
            <person name="Butler J."/>
            <person name="Cook A."/>
            <person name="Corum B."/>
            <person name="DeArellano K."/>
            <person name="DeCaprio D."/>
            <person name="Dooley K.T."/>
            <person name="Dorris L. III"/>
            <person name="Engels R."/>
            <person name="Gloeckner G."/>
            <person name="Hafez N."/>
            <person name="Hagopian D.S."/>
            <person name="Hall J.L."/>
            <person name="Ishikawa S.K."/>
            <person name="Jaffe D.B."/>
            <person name="Kamat A."/>
            <person name="Kudoh J."/>
            <person name="Lehmann R."/>
            <person name="Lokitsang T."/>
            <person name="Macdonald P."/>
            <person name="Major J.E."/>
            <person name="Matthews C.D."/>
            <person name="Mauceli E."/>
            <person name="Menzel U."/>
            <person name="Mihalev A.H."/>
            <person name="Minoshima S."/>
            <person name="Murayama Y."/>
            <person name="Naylor J.W."/>
            <person name="Nicol R."/>
            <person name="Nguyen C."/>
            <person name="O'Leary S.B."/>
            <person name="O'Neill K."/>
            <person name="Parker S.C.J."/>
            <person name="Polley A."/>
            <person name="Raymond C.K."/>
            <person name="Reichwald K."/>
            <person name="Rodriguez J."/>
            <person name="Sasaki T."/>
            <person name="Schilhabel M."/>
            <person name="Siddiqui R."/>
            <person name="Smith C.L."/>
            <person name="Sneddon T.P."/>
            <person name="Talamas J.A."/>
            <person name="Tenzin P."/>
            <person name="Topham K."/>
            <person name="Venkataraman V."/>
            <person name="Wen G."/>
            <person name="Yamazaki S."/>
            <person name="Young S.K."/>
            <person name="Zeng Q."/>
            <person name="Zimmer A.R."/>
            <person name="Rosenthal A."/>
            <person name="Birren B.W."/>
            <person name="Platzer M."/>
            <person name="Shimizu N."/>
            <person name="Lander E.S."/>
        </authorList>
    </citation>
    <scope>NUCLEOTIDE SEQUENCE [LARGE SCALE GENOMIC DNA]</scope>
</reference>
<reference key="6">
    <citation type="journal article" date="2004" name="Genome Res.">
        <title>The status, quality, and expansion of the NIH full-length cDNA project: the Mammalian Gene Collection (MGC).</title>
        <authorList>
            <consortium name="The MGC Project Team"/>
        </authorList>
    </citation>
    <scope>NUCLEOTIDE SEQUENCE [LARGE SCALE MRNA] (ISOFORM 1)</scope>
    <source>
        <tissue>Muscle</tissue>
    </source>
</reference>
<reference key="7">
    <citation type="journal article" date="2002" name="J. Biol. Chem.">
        <title>Identification and characterization of a novel human DNA glycosylase for repair of cytosine-derived lesions.</title>
        <authorList>
            <person name="Hazra T.K."/>
            <person name="Kow Y.W."/>
            <person name="Hatahet Z."/>
            <person name="Imhoff B."/>
            <person name="Boldogh I."/>
            <person name="Mokkapati S.K."/>
            <person name="Mitra S."/>
            <person name="Izumi T."/>
        </authorList>
    </citation>
    <scope>PROTEIN SEQUENCE OF 2-10</scope>
    <scope>FUNCTION</scope>
    <scope>SUBCELLULAR LOCATION</scope>
    <scope>TISSUE SPECIFICITY</scope>
</reference>
<reference key="8">
    <citation type="journal article" date="2003" name="J. Biol. Chem.">
        <title>Repair of oxidized bases in DNA bubble structures by human DNA glycosylases NEIL1 and NEIL2.</title>
        <authorList>
            <person name="Dou H."/>
            <person name="Mitra S."/>
            <person name="Hazra T.K."/>
        </authorList>
    </citation>
    <scope>FUNCTION</scope>
    <scope>MUTAGENESIS OF LYS-50</scope>
</reference>
<reference key="9">
    <citation type="journal article" date="2004" name="Nucleic Acids Res.">
        <title>Acetylation of the human DNA glycosylase NEIL2 and inhibition of its activity.</title>
        <authorList>
            <person name="Bhakat K.K."/>
            <person name="Hazra T.K."/>
            <person name="Mitra S."/>
        </authorList>
    </citation>
    <scope>PROTEIN SEQUENCE OF 40-57 AND 142-161</scope>
    <scope>FUNCTION</scope>
    <scope>MUTAGENESIS OF LYS-50 AND LYS-154</scope>
    <scope>INTERACTION WITH EP300</scope>
    <scope>ACETYLATION AT LYS-50 AND LYS-154</scope>
</reference>
<reference key="10">
    <citation type="journal article" date="2004" name="J. Biol. Chem.">
        <title>Identification of a zinc finger domain in the human NEIL2 (Nei-like-2) protein.</title>
        <authorList>
            <person name="Das A."/>
            <person name="Rajagopalan L."/>
            <person name="Mathura V.S."/>
            <person name="Rigby S.J."/>
            <person name="Mitra S."/>
            <person name="Hazra T.K."/>
        </authorList>
    </citation>
    <scope>MUTAGENESIS OF CYS-291; HIS-295; ARG-310; CYS-315 AND CYS-318</scope>
    <scope>FUNCTION</scope>
    <scope>IDENTIFICATION OF ZINC-FINGER</scope>
    <scope>ZINC-BINDING</scope>
    <scope>3D-STRUCTURE MODELING OF 192-319</scope>
    <scope>IDENTIFICATION BY MASS SPECTROMETRY</scope>
</reference>
<reference key="11">
    <citation type="journal article" date="2013" name="J. Proteome Res.">
        <title>Toward a comprehensive characterization of a human cancer cell phosphoproteome.</title>
        <authorList>
            <person name="Zhou H."/>
            <person name="Di Palma S."/>
            <person name="Preisinger C."/>
            <person name="Peng M."/>
            <person name="Polat A.N."/>
            <person name="Heck A.J."/>
            <person name="Mohammed S."/>
        </authorList>
    </citation>
    <scope>PHOSPHORYLATION [LARGE SCALE ANALYSIS] AT SER-68</scope>
    <scope>IDENTIFICATION BY MASS SPECTROMETRY [LARGE SCALE ANALYSIS]</scope>
    <source>
        <tissue>Cervix carcinoma</tissue>
        <tissue>Erythroleukemia</tissue>
    </source>
</reference>
<reference key="12">
    <citation type="journal article" date="2014" name="J. Proteomics">
        <title>An enzyme assisted RP-RPLC approach for in-depth analysis of human liver phosphoproteome.</title>
        <authorList>
            <person name="Bian Y."/>
            <person name="Song C."/>
            <person name="Cheng K."/>
            <person name="Dong M."/>
            <person name="Wang F."/>
            <person name="Huang J."/>
            <person name="Sun D."/>
            <person name="Wang L."/>
            <person name="Ye M."/>
            <person name="Zou H."/>
        </authorList>
    </citation>
    <scope>IDENTIFICATION BY MASS SPECTROMETRY [LARGE SCALE ANALYSIS]</scope>
    <source>
        <tissue>Liver</tissue>
    </source>
</reference>
<evidence type="ECO:0000250" key="1"/>
<evidence type="ECO:0000255" key="2">
    <source>
        <dbReference type="PROSITE-ProRule" id="PRU00391"/>
    </source>
</evidence>
<evidence type="ECO:0000255" key="3">
    <source>
        <dbReference type="PROSITE-ProRule" id="PRU00392"/>
    </source>
</evidence>
<evidence type="ECO:0000256" key="4">
    <source>
        <dbReference type="SAM" id="MobiDB-lite"/>
    </source>
</evidence>
<evidence type="ECO:0000269" key="5">
    <source>
    </source>
</evidence>
<evidence type="ECO:0000269" key="6">
    <source>
    </source>
</evidence>
<evidence type="ECO:0000269" key="7">
    <source>
    </source>
</evidence>
<evidence type="ECO:0000269" key="8">
    <source>
    </source>
</evidence>
<evidence type="ECO:0000269" key="9">
    <source>
    </source>
</evidence>
<evidence type="ECO:0000269" key="10">
    <source ref="4"/>
</evidence>
<evidence type="ECO:0000303" key="11">
    <source>
    </source>
</evidence>
<evidence type="ECO:0000303" key="12">
    <source>
    </source>
</evidence>
<evidence type="ECO:0000305" key="13"/>
<evidence type="ECO:0007744" key="14">
    <source>
    </source>
</evidence>
<name>NEIL2_HUMAN</name>
<protein>
    <recommendedName>
        <fullName>Endonuclease 8-like 2</fullName>
        <ecNumber>3.2.2.-</ecNumber>
        <ecNumber>4.2.99.18</ecNumber>
    </recommendedName>
    <alternativeName>
        <fullName>DNA glycosylase/AP lyase Neil2</fullName>
    </alternativeName>
    <alternativeName>
        <fullName>DNA-(apurinic or apyrimidinic site) lyase Neil2</fullName>
    </alternativeName>
    <alternativeName>
        <fullName>Endonuclease VIII-like 2</fullName>
    </alternativeName>
    <alternativeName>
        <fullName>Nei homolog 2</fullName>
        <shortName>NEH2</shortName>
    </alternativeName>
    <alternativeName>
        <fullName>Nei-like protein 2</fullName>
    </alternativeName>
</protein>
<feature type="initiator methionine" description="Removed" evidence="5">
    <location>
        <position position="1"/>
    </location>
</feature>
<feature type="chain" id="PRO_0000170908" description="Endonuclease 8-like 2">
    <location>
        <begin position="2"/>
        <end position="332"/>
    </location>
</feature>
<feature type="zinc finger region" description="FPG-type" evidence="2">
    <location>
        <begin position="284"/>
        <end position="320"/>
    </location>
</feature>
<feature type="region of interest" description="Disordered" evidence="4">
    <location>
        <begin position="59"/>
        <end position="121"/>
    </location>
</feature>
<feature type="compositionally biased region" description="Basic and acidic residues" evidence="4">
    <location>
        <begin position="74"/>
        <end position="84"/>
    </location>
</feature>
<feature type="compositionally biased region" description="Polar residues" evidence="4">
    <location>
        <begin position="94"/>
        <end position="104"/>
    </location>
</feature>
<feature type="active site" description="Schiff-base intermediate with DNA" evidence="13">
    <location>
        <position position="2"/>
    </location>
</feature>
<feature type="active site" description="Proton donor" evidence="13">
    <location>
        <position position="3"/>
    </location>
</feature>
<feature type="active site" description="Proton donor; for beta-elimination activity" evidence="13">
    <location>
        <position position="50"/>
    </location>
</feature>
<feature type="active site" description="Proton donor; for delta-elimination activity" evidence="13">
    <location>
        <position position="310"/>
    </location>
</feature>
<feature type="binding site" evidence="1">
    <location>
        <position position="231"/>
    </location>
    <ligand>
        <name>DNA</name>
        <dbReference type="ChEBI" id="CHEBI:16991"/>
    </ligand>
</feature>
<feature type="modified residue" description="N6-acetyllysine" evidence="8">
    <location>
        <position position="50"/>
    </location>
</feature>
<feature type="modified residue" description="Phosphoserine" evidence="14">
    <location>
        <position position="68"/>
    </location>
</feature>
<feature type="modified residue" description="N6-acetyllysine" evidence="8">
    <location>
        <position position="154"/>
    </location>
</feature>
<feature type="splice variant" id="VSP_012208" description="In isoform 3." evidence="11">
    <location>
        <begin position="1"/>
        <end position="61"/>
    </location>
</feature>
<feature type="splice variant" id="VSP_043343" description="In isoform 4." evidence="11">
    <location>
        <begin position="48"/>
        <end position="163"/>
    </location>
</feature>
<feature type="splice variant" id="VSP_012209" description="In isoform 2." evidence="12">
    <location>
        <begin position="79"/>
        <end position="94"/>
    </location>
</feature>
<feature type="sequence variant" id="VAR_020585" description="In dbSNP:rs8191611." evidence="10">
    <original>T</original>
    <variation>S</variation>
    <location>
        <position position="70"/>
    </location>
</feature>
<feature type="sequence variant" id="VAR_020586" description="In dbSNP:rs8191613." evidence="6 10">
    <original>R</original>
    <variation>Q</variation>
    <location>
        <position position="103"/>
    </location>
</feature>
<feature type="sequence variant" id="VAR_020587" description="In dbSNP:rs8191612." evidence="10">
    <original>R</original>
    <variation>W</variation>
    <location>
        <position position="103"/>
    </location>
</feature>
<feature type="sequence variant" id="VAR_020588" description="In dbSNP:rs8191664." evidence="10">
    <original>R</original>
    <variation>L</variation>
    <location>
        <position position="257"/>
    </location>
</feature>
<feature type="sequence variant" id="VAR_020589" description="In dbSNP:rs8191666." evidence="10">
    <original>P</original>
    <variation>T</variation>
    <location>
        <position position="304"/>
    </location>
</feature>
<feature type="mutagenesis site" description="Loss of glycosylase and AP lyase activity." evidence="7 8">
    <original>K</original>
    <variation>R</variation>
    <location>
        <position position="50"/>
    </location>
</feature>
<feature type="mutagenesis site" description="No effect on glycosylase and AP lyase activity." evidence="8">
    <original>K</original>
    <variation>R</variation>
    <location>
        <position position="154"/>
    </location>
</feature>
<feature type="mutagenesis site" description="Loss of glycosylase and AP lyase activity." evidence="9">
    <original>C</original>
    <variation>S</variation>
    <location>
        <position position="291"/>
    </location>
</feature>
<feature type="mutagenesis site" description="Loss of glycosylase and AP lyase activity." evidence="9">
    <original>H</original>
    <variation>A</variation>
    <location>
        <position position="295"/>
    </location>
</feature>
<feature type="mutagenesis site" description="Strongly reduces strand AP lyase activity." evidence="9">
    <original>R</original>
    <variation>Q</variation>
    <location>
        <position position="310"/>
    </location>
</feature>
<feature type="mutagenesis site" description="Loss of glycosylase and AP lyase activity." evidence="9">
    <original>C</original>
    <variation>S</variation>
    <location>
        <position position="315"/>
    </location>
</feature>
<feature type="mutagenesis site" description="Loss of glycosylase and AP lyase activity." evidence="9">
    <original>C</original>
    <variation>S</variation>
    <location>
        <position position="318"/>
    </location>
</feature>